<sequence>MKDNIELTIFTPEKNIKIGEIKEVITEGLDGDLAILPNHVNMITYLKPTITKYIDLNGNKNNIFTSSGVLKVEDNKVYIICDASEKPEDIDIKRAENAKKRAEERLRNKKEIDVKRAELALFRSIARIKIKEL</sequence>
<comment type="function">
    <text evidence="1">Produces ATP from ADP in the presence of a proton gradient across the membrane.</text>
</comment>
<comment type="subunit">
    <text evidence="1">F-type ATPases have 2 components, CF(1) - the catalytic core - and CF(0) - the membrane proton channel. CF(1) has five subunits: alpha(3), beta(3), gamma(1), delta(1), epsilon(1). CF(0) has three main subunits: a, b and c.</text>
</comment>
<comment type="subcellular location">
    <subcellularLocation>
        <location evidence="1">Cell membrane</location>
        <topology evidence="1">Peripheral membrane protein</topology>
    </subcellularLocation>
</comment>
<comment type="similarity">
    <text evidence="1">Belongs to the ATPase epsilon chain family.</text>
</comment>
<protein>
    <recommendedName>
        <fullName evidence="1">ATP synthase epsilon chain</fullName>
    </recommendedName>
    <alternativeName>
        <fullName evidence="1">ATP synthase F1 sector epsilon subunit</fullName>
    </alternativeName>
    <alternativeName>
        <fullName evidence="1">F-ATPase epsilon subunit</fullName>
    </alternativeName>
</protein>
<accession>C1FQP6</accession>
<feature type="chain" id="PRO_1000146319" description="ATP synthase epsilon chain">
    <location>
        <begin position="1"/>
        <end position="133"/>
    </location>
</feature>
<proteinExistence type="inferred from homology"/>
<organism>
    <name type="scientific">Clostridium botulinum (strain Kyoto / Type A2)</name>
    <dbReference type="NCBI Taxonomy" id="536232"/>
    <lineage>
        <taxon>Bacteria</taxon>
        <taxon>Bacillati</taxon>
        <taxon>Bacillota</taxon>
        <taxon>Clostridia</taxon>
        <taxon>Eubacteriales</taxon>
        <taxon>Clostridiaceae</taxon>
        <taxon>Clostridium</taxon>
    </lineage>
</organism>
<dbReference type="EMBL" id="CP001581">
    <property type="protein sequence ID" value="ACO83934.1"/>
    <property type="molecule type" value="Genomic_DNA"/>
</dbReference>
<dbReference type="RefSeq" id="WP_003356141.1">
    <property type="nucleotide sequence ID" value="NC_012563.1"/>
</dbReference>
<dbReference type="SMR" id="C1FQP6"/>
<dbReference type="KEGG" id="cby:CLM_0201"/>
<dbReference type="eggNOG" id="COG0355">
    <property type="taxonomic scope" value="Bacteria"/>
</dbReference>
<dbReference type="HOGENOM" id="CLU_084338_1_1_9"/>
<dbReference type="Proteomes" id="UP000001374">
    <property type="component" value="Chromosome"/>
</dbReference>
<dbReference type="GO" id="GO:0005886">
    <property type="term" value="C:plasma membrane"/>
    <property type="evidence" value="ECO:0007669"/>
    <property type="project" value="UniProtKB-SubCell"/>
</dbReference>
<dbReference type="GO" id="GO:0045259">
    <property type="term" value="C:proton-transporting ATP synthase complex"/>
    <property type="evidence" value="ECO:0007669"/>
    <property type="project" value="UniProtKB-KW"/>
</dbReference>
<dbReference type="GO" id="GO:0005524">
    <property type="term" value="F:ATP binding"/>
    <property type="evidence" value="ECO:0007669"/>
    <property type="project" value="UniProtKB-UniRule"/>
</dbReference>
<dbReference type="GO" id="GO:0046933">
    <property type="term" value="F:proton-transporting ATP synthase activity, rotational mechanism"/>
    <property type="evidence" value="ECO:0007669"/>
    <property type="project" value="UniProtKB-UniRule"/>
</dbReference>
<dbReference type="CDD" id="cd12152">
    <property type="entry name" value="F1-ATPase_delta"/>
    <property type="match status" value="1"/>
</dbReference>
<dbReference type="Gene3D" id="1.20.5.440">
    <property type="entry name" value="ATP synthase delta/epsilon subunit, C-terminal domain"/>
    <property type="match status" value="1"/>
</dbReference>
<dbReference type="Gene3D" id="2.60.15.10">
    <property type="entry name" value="F0F1 ATP synthase delta/epsilon subunit, N-terminal"/>
    <property type="match status" value="1"/>
</dbReference>
<dbReference type="HAMAP" id="MF_00530">
    <property type="entry name" value="ATP_synth_epsil_bac"/>
    <property type="match status" value="1"/>
</dbReference>
<dbReference type="InterPro" id="IPR036794">
    <property type="entry name" value="ATP_F1_dsu/esu_C_sf"/>
</dbReference>
<dbReference type="InterPro" id="IPR001469">
    <property type="entry name" value="ATP_synth_F1_dsu/esu"/>
</dbReference>
<dbReference type="InterPro" id="IPR020546">
    <property type="entry name" value="ATP_synth_F1_dsu/esu_N"/>
</dbReference>
<dbReference type="InterPro" id="IPR020547">
    <property type="entry name" value="ATP_synth_F1_esu_C"/>
</dbReference>
<dbReference type="InterPro" id="IPR036771">
    <property type="entry name" value="ATPsynth_dsu/esu_N"/>
</dbReference>
<dbReference type="NCBIfam" id="TIGR01216">
    <property type="entry name" value="ATP_synt_epsi"/>
    <property type="match status" value="1"/>
</dbReference>
<dbReference type="NCBIfam" id="NF009984">
    <property type="entry name" value="PRK13450.1"/>
    <property type="match status" value="1"/>
</dbReference>
<dbReference type="PANTHER" id="PTHR13822">
    <property type="entry name" value="ATP SYNTHASE DELTA/EPSILON CHAIN"/>
    <property type="match status" value="1"/>
</dbReference>
<dbReference type="PANTHER" id="PTHR13822:SF10">
    <property type="entry name" value="ATP SYNTHASE EPSILON CHAIN, CHLOROPLASTIC"/>
    <property type="match status" value="1"/>
</dbReference>
<dbReference type="Pfam" id="PF00401">
    <property type="entry name" value="ATP-synt_DE"/>
    <property type="match status" value="1"/>
</dbReference>
<dbReference type="Pfam" id="PF02823">
    <property type="entry name" value="ATP-synt_DE_N"/>
    <property type="match status" value="1"/>
</dbReference>
<dbReference type="SUPFAM" id="SSF46604">
    <property type="entry name" value="Epsilon subunit of F1F0-ATP synthase C-terminal domain"/>
    <property type="match status" value="1"/>
</dbReference>
<dbReference type="SUPFAM" id="SSF51344">
    <property type="entry name" value="Epsilon subunit of F1F0-ATP synthase N-terminal domain"/>
    <property type="match status" value="1"/>
</dbReference>
<reference key="1">
    <citation type="submission" date="2008-10" db="EMBL/GenBank/DDBJ databases">
        <title>Genome sequence of Clostridium botulinum A2 Kyoto.</title>
        <authorList>
            <person name="Shrivastava S."/>
            <person name="Brinkac L.M."/>
            <person name="Brown J.L."/>
            <person name="Bruce D."/>
            <person name="Detter C.C."/>
            <person name="Johnson E.A."/>
            <person name="Munk C.A."/>
            <person name="Smith L.A."/>
            <person name="Smith T.J."/>
            <person name="Sutton G."/>
            <person name="Brettin T.S."/>
        </authorList>
    </citation>
    <scope>NUCLEOTIDE SEQUENCE [LARGE SCALE GENOMIC DNA]</scope>
    <source>
        <strain>Kyoto / Type A2</strain>
    </source>
</reference>
<keyword id="KW-0066">ATP synthesis</keyword>
<keyword id="KW-1003">Cell membrane</keyword>
<keyword id="KW-0139">CF(1)</keyword>
<keyword id="KW-0375">Hydrogen ion transport</keyword>
<keyword id="KW-0406">Ion transport</keyword>
<keyword id="KW-0472">Membrane</keyword>
<keyword id="KW-0813">Transport</keyword>
<name>ATPE_CLOBJ</name>
<evidence type="ECO:0000255" key="1">
    <source>
        <dbReference type="HAMAP-Rule" id="MF_00530"/>
    </source>
</evidence>
<gene>
    <name evidence="1" type="primary">atpC</name>
    <name type="ordered locus">CLM_0201</name>
</gene>